<reference key="1">
    <citation type="journal article" date="2002" name="Nucleic Acids Res.">
        <title>Genome sequence of Shigella flexneri 2a: insights into pathogenicity through comparison with genomes of Escherichia coli K12 and O157.</title>
        <authorList>
            <person name="Jin Q."/>
            <person name="Yuan Z."/>
            <person name="Xu J."/>
            <person name="Wang Y."/>
            <person name="Shen Y."/>
            <person name="Lu W."/>
            <person name="Wang J."/>
            <person name="Liu H."/>
            <person name="Yang J."/>
            <person name="Yang F."/>
            <person name="Zhang X."/>
            <person name="Zhang J."/>
            <person name="Yang G."/>
            <person name="Wu H."/>
            <person name="Qu D."/>
            <person name="Dong J."/>
            <person name="Sun L."/>
            <person name="Xue Y."/>
            <person name="Zhao A."/>
            <person name="Gao Y."/>
            <person name="Zhu J."/>
            <person name="Kan B."/>
            <person name="Ding K."/>
            <person name="Chen S."/>
            <person name="Cheng H."/>
            <person name="Yao Z."/>
            <person name="He B."/>
            <person name="Chen R."/>
            <person name="Ma D."/>
            <person name="Qiang B."/>
            <person name="Wen Y."/>
            <person name="Hou Y."/>
            <person name="Yu J."/>
        </authorList>
    </citation>
    <scope>NUCLEOTIDE SEQUENCE [LARGE SCALE GENOMIC DNA]</scope>
    <source>
        <strain>301 / Serotype 2a</strain>
    </source>
</reference>
<reference key="2">
    <citation type="journal article" date="2003" name="Infect. Immun.">
        <title>Complete genome sequence and comparative genomics of Shigella flexneri serotype 2a strain 2457T.</title>
        <authorList>
            <person name="Wei J."/>
            <person name="Goldberg M.B."/>
            <person name="Burland V."/>
            <person name="Venkatesan M.M."/>
            <person name="Deng W."/>
            <person name="Fournier G."/>
            <person name="Mayhew G.F."/>
            <person name="Plunkett G. III"/>
            <person name="Rose D.J."/>
            <person name="Darling A."/>
            <person name="Mau B."/>
            <person name="Perna N.T."/>
            <person name="Payne S.M."/>
            <person name="Runyen-Janecky L.J."/>
            <person name="Zhou S."/>
            <person name="Schwartz D.C."/>
            <person name="Blattner F.R."/>
        </authorList>
    </citation>
    <scope>NUCLEOTIDE SEQUENCE [LARGE SCALE GENOMIC DNA]</scope>
    <source>
        <strain>ATCC 700930 / 2457T / Serotype 2a</strain>
    </source>
</reference>
<sequence>MNLQHHFLIAMPALQDPIFRRSVVYICEHNTNGAMGIIVNKPLENLKIEGILEKLKITPEPRDESIRLDKPVMLGGPLAEDRGFILHTPPSNFASSIRISDNTVMTTSRDVLETLGTDKQPSDVLVALGYASWEKGQLEQEILDNAWLTAPADLNILFKTPIADRWREAAKLIGVDILTMPGVAGHA</sequence>
<protein>
    <recommendedName>
        <fullName>UPF0301 protein YqgE</fullName>
    </recommendedName>
</protein>
<dbReference type="EMBL" id="AE005674">
    <property type="protein sequence ID" value="AAN44420.1"/>
    <property type="status" value="ALT_INIT"/>
    <property type="molecule type" value="Genomic_DNA"/>
</dbReference>
<dbReference type="EMBL" id="AE014073">
    <property type="protein sequence ID" value="AAP18245.1"/>
    <property type="status" value="ALT_INIT"/>
    <property type="molecule type" value="Genomic_DNA"/>
</dbReference>
<dbReference type="RefSeq" id="NP_708713.3">
    <property type="nucleotide sequence ID" value="NC_004337.2"/>
</dbReference>
<dbReference type="RefSeq" id="WP_001053178.1">
    <property type="nucleotide sequence ID" value="NZ_WPGW01000085.1"/>
</dbReference>
<dbReference type="SMR" id="P0A8W7"/>
<dbReference type="STRING" id="198214.SF2939"/>
<dbReference type="PaxDb" id="198214-SF2939"/>
<dbReference type="GeneID" id="1026000"/>
<dbReference type="KEGG" id="sfl:SF2939"/>
<dbReference type="KEGG" id="sfx:S3143"/>
<dbReference type="PATRIC" id="fig|198214.7.peg.3496"/>
<dbReference type="HOGENOM" id="CLU_057596_1_1_6"/>
<dbReference type="Proteomes" id="UP000001006">
    <property type="component" value="Chromosome"/>
</dbReference>
<dbReference type="Proteomes" id="UP000002673">
    <property type="component" value="Chromosome"/>
</dbReference>
<dbReference type="GO" id="GO:0005829">
    <property type="term" value="C:cytosol"/>
    <property type="evidence" value="ECO:0007669"/>
    <property type="project" value="TreeGrafter"/>
</dbReference>
<dbReference type="FunFam" id="3.30.70.1300:FF:000001">
    <property type="entry name" value="UPF0301 protein YqgE"/>
    <property type="match status" value="1"/>
</dbReference>
<dbReference type="Gene3D" id="3.40.1740.10">
    <property type="entry name" value="VC0467-like"/>
    <property type="match status" value="1"/>
</dbReference>
<dbReference type="Gene3D" id="3.30.70.1300">
    <property type="entry name" value="VC0467-like domains"/>
    <property type="match status" value="1"/>
</dbReference>
<dbReference type="HAMAP" id="MF_00758">
    <property type="entry name" value="UPF0301"/>
    <property type="match status" value="1"/>
</dbReference>
<dbReference type="InterPro" id="IPR003774">
    <property type="entry name" value="AlgH-like"/>
</dbReference>
<dbReference type="NCBIfam" id="NF001266">
    <property type="entry name" value="PRK00228.1-1"/>
    <property type="match status" value="1"/>
</dbReference>
<dbReference type="PANTHER" id="PTHR30327">
    <property type="entry name" value="UNCHARACTERIZED PROTEIN YQGE"/>
    <property type="match status" value="1"/>
</dbReference>
<dbReference type="PANTHER" id="PTHR30327:SF1">
    <property type="entry name" value="UPF0301 PROTEIN YQGE"/>
    <property type="match status" value="1"/>
</dbReference>
<dbReference type="Pfam" id="PF02622">
    <property type="entry name" value="DUF179"/>
    <property type="match status" value="1"/>
</dbReference>
<dbReference type="SUPFAM" id="SSF143456">
    <property type="entry name" value="VC0467-like"/>
    <property type="match status" value="1"/>
</dbReference>
<organism>
    <name type="scientific">Shigella flexneri</name>
    <dbReference type="NCBI Taxonomy" id="623"/>
    <lineage>
        <taxon>Bacteria</taxon>
        <taxon>Pseudomonadati</taxon>
        <taxon>Pseudomonadota</taxon>
        <taxon>Gammaproteobacteria</taxon>
        <taxon>Enterobacterales</taxon>
        <taxon>Enterobacteriaceae</taxon>
        <taxon>Shigella</taxon>
    </lineage>
</organism>
<accession>P0A8W7</accession>
<accession>P52049</accession>
<accession>P76648</accession>
<comment type="similarity">
    <text evidence="1">Belongs to the UPF0301 (AlgH) family.</text>
</comment>
<comment type="sequence caution" evidence="1">
    <conflict type="erroneous initiation">
        <sequence resource="EMBL-CDS" id="AAN44420"/>
    </conflict>
</comment>
<comment type="sequence caution" evidence="1">
    <conflict type="erroneous initiation">
        <sequence resource="EMBL-CDS" id="AAP18245"/>
    </conflict>
</comment>
<keyword id="KW-1185">Reference proteome</keyword>
<name>YQGE_SHIFL</name>
<evidence type="ECO:0000305" key="1"/>
<proteinExistence type="inferred from homology"/>
<feature type="chain" id="PRO_0000214347" description="UPF0301 protein YqgE">
    <location>
        <begin position="1"/>
        <end position="187"/>
    </location>
</feature>
<gene>
    <name type="primary">yqgE</name>
    <name type="ordered locus">SF2939</name>
    <name type="ordered locus">S3143</name>
</gene>